<accession>Q4WRQ4</accession>
<reference key="1">
    <citation type="journal article" date="2005" name="Nature">
        <title>Genomic sequence of the pathogenic and allergenic filamentous fungus Aspergillus fumigatus.</title>
        <authorList>
            <person name="Nierman W.C."/>
            <person name="Pain A."/>
            <person name="Anderson M.J."/>
            <person name="Wortman J.R."/>
            <person name="Kim H.S."/>
            <person name="Arroyo J."/>
            <person name="Berriman M."/>
            <person name="Abe K."/>
            <person name="Archer D.B."/>
            <person name="Bermejo C."/>
            <person name="Bennett J.W."/>
            <person name="Bowyer P."/>
            <person name="Chen D."/>
            <person name="Collins M."/>
            <person name="Coulsen R."/>
            <person name="Davies R."/>
            <person name="Dyer P.S."/>
            <person name="Farman M.L."/>
            <person name="Fedorova N."/>
            <person name="Fedorova N.D."/>
            <person name="Feldblyum T.V."/>
            <person name="Fischer R."/>
            <person name="Fosker N."/>
            <person name="Fraser A."/>
            <person name="Garcia J.L."/>
            <person name="Garcia M.J."/>
            <person name="Goble A."/>
            <person name="Goldman G.H."/>
            <person name="Gomi K."/>
            <person name="Griffith-Jones S."/>
            <person name="Gwilliam R."/>
            <person name="Haas B.J."/>
            <person name="Haas H."/>
            <person name="Harris D.E."/>
            <person name="Horiuchi H."/>
            <person name="Huang J."/>
            <person name="Humphray S."/>
            <person name="Jimenez J."/>
            <person name="Keller N."/>
            <person name="Khouri H."/>
            <person name="Kitamoto K."/>
            <person name="Kobayashi T."/>
            <person name="Konzack S."/>
            <person name="Kulkarni R."/>
            <person name="Kumagai T."/>
            <person name="Lafton A."/>
            <person name="Latge J.-P."/>
            <person name="Li W."/>
            <person name="Lord A."/>
            <person name="Lu C."/>
            <person name="Majoros W.H."/>
            <person name="May G.S."/>
            <person name="Miller B.L."/>
            <person name="Mohamoud Y."/>
            <person name="Molina M."/>
            <person name="Monod M."/>
            <person name="Mouyna I."/>
            <person name="Mulligan S."/>
            <person name="Murphy L.D."/>
            <person name="O'Neil S."/>
            <person name="Paulsen I."/>
            <person name="Penalva M.A."/>
            <person name="Pertea M."/>
            <person name="Price C."/>
            <person name="Pritchard B.L."/>
            <person name="Quail M.A."/>
            <person name="Rabbinowitsch E."/>
            <person name="Rawlins N."/>
            <person name="Rajandream M.A."/>
            <person name="Reichard U."/>
            <person name="Renauld H."/>
            <person name="Robson G.D."/>
            <person name="Rodriguez de Cordoba S."/>
            <person name="Rodriguez-Pena J.M."/>
            <person name="Ronning C.M."/>
            <person name="Rutter S."/>
            <person name="Salzberg S.L."/>
            <person name="Sanchez M."/>
            <person name="Sanchez-Ferrero J.C."/>
            <person name="Saunders D."/>
            <person name="Seeger K."/>
            <person name="Squares R."/>
            <person name="Squares S."/>
            <person name="Takeuchi M."/>
            <person name="Tekaia F."/>
            <person name="Turner G."/>
            <person name="Vazquez de Aldana C.R."/>
            <person name="Weidman J."/>
            <person name="White O."/>
            <person name="Woodward J.R."/>
            <person name="Yu J.-H."/>
            <person name="Fraser C.M."/>
            <person name="Galagan J.E."/>
            <person name="Asai K."/>
            <person name="Machida M."/>
            <person name="Hall N."/>
            <person name="Barrell B.G."/>
            <person name="Denning D.W."/>
        </authorList>
    </citation>
    <scope>NUCLEOTIDE SEQUENCE [LARGE SCALE GENOMIC DNA]</scope>
    <source>
        <strain>ATCC MYA-4609 / CBS 101355 / FGSC A1100 / Af293</strain>
    </source>
</reference>
<reference key="2">
    <citation type="journal article" date="2006" name="Curr. Genet.">
        <title>Transcriptome analysis of Aspergillus fumigatus exposed to voriconazole.</title>
        <authorList>
            <person name="da Silva Ferreira M.E."/>
            <person name="Malavazi I."/>
            <person name="Savoldi M."/>
            <person name="Brakhage A.A."/>
            <person name="Goldman M.H."/>
            <person name="Kim H.S."/>
            <person name="Nierman W.C."/>
            <person name="Goldman G.H."/>
        </authorList>
    </citation>
    <scope>IDENTIFICATION</scope>
    <scope>INDUCTION</scope>
    <scope>FUNCTION</scope>
</reference>
<comment type="function">
    <text evidence="6">Major facilitator superfamily transporter that may be involved in A.fumigatus adaptation to azoles such as vorizonazole.</text>
</comment>
<comment type="subcellular location">
    <subcellularLocation>
        <location evidence="1">Membrane</location>
        <topology>Multi-pass membrane protein</topology>
    </subcellularLocation>
</comment>
<comment type="induction">
    <text evidence="3">Expression is induced upon voriconazole treatment.</text>
</comment>
<comment type="similarity">
    <text evidence="5">Belongs to the major facilitator superfamily.</text>
</comment>
<gene>
    <name evidence="4" type="primary">mfsB</name>
    <name type="ORF">AFUA_1G15490</name>
</gene>
<organism>
    <name type="scientific">Aspergillus fumigatus (strain ATCC MYA-4609 / CBS 101355 / FGSC A1100 / Af293)</name>
    <name type="common">Neosartorya fumigata</name>
    <dbReference type="NCBI Taxonomy" id="330879"/>
    <lineage>
        <taxon>Eukaryota</taxon>
        <taxon>Fungi</taxon>
        <taxon>Dikarya</taxon>
        <taxon>Ascomycota</taxon>
        <taxon>Pezizomycotina</taxon>
        <taxon>Eurotiomycetes</taxon>
        <taxon>Eurotiomycetidae</taxon>
        <taxon>Eurotiales</taxon>
        <taxon>Aspergillaceae</taxon>
        <taxon>Aspergillus</taxon>
        <taxon>Aspergillus subgen. Fumigati</taxon>
    </lineage>
</organism>
<dbReference type="EMBL" id="AAHF01000004">
    <property type="protein sequence ID" value="EAL90878.1"/>
    <property type="molecule type" value="Genomic_DNA"/>
</dbReference>
<dbReference type="RefSeq" id="XP_752916.1">
    <property type="nucleotide sequence ID" value="XM_747823.1"/>
</dbReference>
<dbReference type="FunCoup" id="Q4WRQ4">
    <property type="interactions" value="67"/>
</dbReference>
<dbReference type="STRING" id="330879.Q4WRQ4"/>
<dbReference type="EnsemblFungi" id="EAL90878">
    <property type="protein sequence ID" value="EAL90878"/>
    <property type="gene ID" value="AFUA_1G15490"/>
</dbReference>
<dbReference type="GeneID" id="3509940"/>
<dbReference type="KEGG" id="afm:AFUA_1G15490"/>
<dbReference type="VEuPathDB" id="FungiDB:Afu1g15490"/>
<dbReference type="eggNOG" id="KOG2615">
    <property type="taxonomic scope" value="Eukaryota"/>
</dbReference>
<dbReference type="HOGENOM" id="CLU_001265_54_5_1"/>
<dbReference type="InParanoid" id="Q4WRQ4"/>
<dbReference type="OMA" id="AWWACGI"/>
<dbReference type="OrthoDB" id="10262656at2759"/>
<dbReference type="Proteomes" id="UP000002530">
    <property type="component" value="Chromosome 1"/>
</dbReference>
<dbReference type="GO" id="GO:0016020">
    <property type="term" value="C:membrane"/>
    <property type="evidence" value="ECO:0007669"/>
    <property type="project" value="UniProtKB-SubCell"/>
</dbReference>
<dbReference type="GO" id="GO:0022857">
    <property type="term" value="F:transmembrane transporter activity"/>
    <property type="evidence" value="ECO:0007669"/>
    <property type="project" value="InterPro"/>
</dbReference>
<dbReference type="CDD" id="cd17330">
    <property type="entry name" value="MFS_SLC46_TetA_like"/>
    <property type="match status" value="1"/>
</dbReference>
<dbReference type="Gene3D" id="1.20.1250.20">
    <property type="entry name" value="MFS general substrate transporter like domains"/>
    <property type="match status" value="1"/>
</dbReference>
<dbReference type="InterPro" id="IPR011701">
    <property type="entry name" value="MFS"/>
</dbReference>
<dbReference type="InterPro" id="IPR020846">
    <property type="entry name" value="MFS_dom"/>
</dbReference>
<dbReference type="InterPro" id="IPR036259">
    <property type="entry name" value="MFS_trans_sf"/>
</dbReference>
<dbReference type="PANTHER" id="PTHR23504:SF15">
    <property type="entry name" value="MAJOR FACILITATOR SUPERFAMILY (MFS) PROFILE DOMAIN-CONTAINING PROTEIN"/>
    <property type="match status" value="1"/>
</dbReference>
<dbReference type="PANTHER" id="PTHR23504">
    <property type="entry name" value="MAJOR FACILITATOR SUPERFAMILY DOMAIN-CONTAINING PROTEIN 10"/>
    <property type="match status" value="1"/>
</dbReference>
<dbReference type="Pfam" id="PF07690">
    <property type="entry name" value="MFS_1"/>
    <property type="match status" value="1"/>
</dbReference>
<dbReference type="SUPFAM" id="SSF103473">
    <property type="entry name" value="MFS general substrate transporter"/>
    <property type="match status" value="1"/>
</dbReference>
<dbReference type="PROSITE" id="PS50850">
    <property type="entry name" value="MFS"/>
    <property type="match status" value="1"/>
</dbReference>
<sequence>MFKRPSFLRRQRHTVGRDDWSAFPVRQLFVLALCRICEPIAFMSIFPYVYHMVEAFKVTDDDHKIALYAGLITSSFTFAEFSAGMFWGRMSDKIGRKPVLIMGLIGTAISMIVFGFAPNLPTAMVARALGGLLNGNIGVLQTTVAEIVTVKEHQPRAYSIMPFVWCLGSIIGPAMGGALAQPCQNYPGLFQRHTIFDSFPFLLPNLVCVVVLVFGVIVGFLFLEETHPEKRYRRDPGLELGNWLIARCSGSRVQLTEDDTDIKVDANEADYFNYGDVPPPEYRSTETSPQLAPIKNVGALSGDDDIEGQVKGEQCGTPKAFTKQVIFNIVAYGILAYHSVSFDQLIPVFLSTPKSDDNFVLPFKFTGGLGLPTKTIGFMLAVQGVYSMIAQLWLFPFVVRHFGTLRTFRLVLLVWPPLYMLVPYLVLLPSILQTAAVYLALISKITLHVIAFPSTAILLANAAPSSKVLGSINGAAASTASLSRALGPTITGLLHSKGLESGYSIIAWWACGLVCVTGTIQSFWMEESEPRRDSEKAGNSDSTAGIPMRSSFPAGKEYATPEEERRLLSSTRTSVDDLDISNLDLTQIEPAPRSNPLAFAED</sequence>
<evidence type="ECO:0000255" key="1"/>
<evidence type="ECO:0000256" key="2">
    <source>
        <dbReference type="SAM" id="MobiDB-lite"/>
    </source>
</evidence>
<evidence type="ECO:0000269" key="3">
    <source>
    </source>
</evidence>
<evidence type="ECO:0000303" key="4">
    <source>
    </source>
</evidence>
<evidence type="ECO:0000305" key="5"/>
<evidence type="ECO:0000305" key="6">
    <source>
    </source>
</evidence>
<feature type="chain" id="PRO_0000445108" description="Major facilitator superfamily multidrug transporter mfsB">
    <location>
        <begin position="1"/>
        <end position="602"/>
    </location>
</feature>
<feature type="transmembrane region" description="Helical" evidence="1">
    <location>
        <begin position="29"/>
        <end position="49"/>
    </location>
</feature>
<feature type="transmembrane region" description="Helical" evidence="1">
    <location>
        <begin position="67"/>
        <end position="87"/>
    </location>
</feature>
<feature type="transmembrane region" description="Helical" evidence="1">
    <location>
        <begin position="98"/>
        <end position="118"/>
    </location>
</feature>
<feature type="transmembrane region" description="Helical" evidence="1">
    <location>
        <begin position="128"/>
        <end position="148"/>
    </location>
</feature>
<feature type="transmembrane region" description="Helical" evidence="1">
    <location>
        <begin position="160"/>
        <end position="180"/>
    </location>
</feature>
<feature type="transmembrane region" description="Helical" evidence="1">
    <location>
        <begin position="201"/>
        <end position="221"/>
    </location>
</feature>
<feature type="transmembrane region" description="Helical" evidence="1">
    <location>
        <begin position="329"/>
        <end position="349"/>
    </location>
</feature>
<feature type="transmembrane region" description="Helical" evidence="1">
    <location>
        <begin position="378"/>
        <end position="398"/>
    </location>
</feature>
<feature type="transmembrane region" description="Helical" evidence="1">
    <location>
        <begin position="411"/>
        <end position="431"/>
    </location>
</feature>
<feature type="transmembrane region" description="Helical" evidence="1">
    <location>
        <begin position="439"/>
        <end position="459"/>
    </location>
</feature>
<feature type="transmembrane region" description="Helical" evidence="1">
    <location>
        <begin position="468"/>
        <end position="486"/>
    </location>
</feature>
<feature type="transmembrane region" description="Helical" evidence="1">
    <location>
        <begin position="505"/>
        <end position="525"/>
    </location>
</feature>
<feature type="region of interest" description="Disordered" evidence="2">
    <location>
        <begin position="527"/>
        <end position="602"/>
    </location>
</feature>
<feature type="compositionally biased region" description="Basic and acidic residues" evidence="2">
    <location>
        <begin position="528"/>
        <end position="538"/>
    </location>
</feature>
<keyword id="KW-0472">Membrane</keyword>
<keyword id="KW-1185">Reference proteome</keyword>
<keyword id="KW-0812">Transmembrane</keyword>
<keyword id="KW-1133">Transmembrane helix</keyword>
<keyword id="KW-0813">Transport</keyword>
<protein>
    <recommendedName>
        <fullName evidence="4">Major facilitator superfamily multidrug transporter mfsB</fullName>
    </recommendedName>
</protein>
<proteinExistence type="evidence at transcript level"/>
<name>MFSB_ASPFU</name>